<evidence type="ECO:0000250" key="1">
    <source>
        <dbReference type="UniProtKB" id="P23164"/>
    </source>
</evidence>
<evidence type="ECO:0000305" key="2"/>
<accession>P0C9R9</accession>
<comment type="function">
    <text evidence="1">Plays a role in virus cell tropism, and may be required for efficient virus replication in macrophages.</text>
</comment>
<comment type="induction">
    <text evidence="2">Expressed in the early phase of the viral replicative cycle.</text>
</comment>
<comment type="similarity">
    <text evidence="2">Belongs to the asfivirus MGF 360 family.</text>
</comment>
<dbReference type="EMBL" id="AY261360">
    <property type="status" value="NOT_ANNOTATED_CDS"/>
    <property type="molecule type" value="Genomic_DNA"/>
</dbReference>
<dbReference type="SMR" id="P0C9R9"/>
<dbReference type="Proteomes" id="UP000000861">
    <property type="component" value="Segment"/>
</dbReference>
<dbReference type="GO" id="GO:0042330">
    <property type="term" value="P:taxis"/>
    <property type="evidence" value="ECO:0007669"/>
    <property type="project" value="InterPro"/>
</dbReference>
<dbReference type="InterPro" id="IPR002595">
    <property type="entry name" value="ASFV_MGF360"/>
</dbReference>
<dbReference type="Pfam" id="PF01671">
    <property type="entry name" value="ASFV_360"/>
    <property type="match status" value="1"/>
</dbReference>
<sequence length="356" mass="41836">MLPSTLQALTKKVLATQLISEDDYYTLKCCGLWWHEAPLMLCYDKNHQMLVKTPILKEGLLLNTALMKAVQENNYELIMLFTEWGANINYGLLSVNMEHTRNLCRKLGAKEGLEASEILQFFFKTKRHKTSSNIILCHELFSNNLLLQNVDMEELKMIIYWDLKDLTDNIILDDNTSLSEMLTKYWYGIAVRYKLKEAIQYFYQEYEQLNEWRLNCALSFNNVFDLHEIHNTGKVYMDIDEMMRLACIRDNNFLTIYYCFALGADINQAMFTSILNYNVFNMFFCMDLGANAIEESKALAEQKNYHLIVNMLSFKNYSPDPFLISKIIDPKKINTMLKSYYSKNMSTFDYMCIGYF</sequence>
<reference key="1">
    <citation type="submission" date="2003-03" db="EMBL/GenBank/DDBJ databases">
        <title>African swine fever virus genomes.</title>
        <authorList>
            <person name="Kutish G.F."/>
            <person name="Rock D.L."/>
        </authorList>
    </citation>
    <scope>NUCLEOTIDE SEQUENCE [LARGE SCALE GENOMIC DNA]</scope>
</reference>
<proteinExistence type="inferred from homology"/>
<organism>
    <name type="scientific">African swine fever virus (isolate Pig/Kenya/KEN-50/1950)</name>
    <name type="common">ASFV</name>
    <dbReference type="NCBI Taxonomy" id="561445"/>
    <lineage>
        <taxon>Viruses</taxon>
        <taxon>Varidnaviria</taxon>
        <taxon>Bamfordvirae</taxon>
        <taxon>Nucleocytoviricota</taxon>
        <taxon>Pokkesviricetes</taxon>
        <taxon>Asfuvirales</taxon>
        <taxon>Asfarviridae</taxon>
        <taxon>Asfivirus</taxon>
        <taxon>African swine fever virus</taxon>
    </lineage>
</organism>
<protein>
    <recommendedName>
        <fullName>Protein MGF 360-19R</fullName>
    </recommendedName>
</protein>
<keyword id="KW-0040">ANK repeat</keyword>
<keyword id="KW-0244">Early protein</keyword>
<feature type="chain" id="PRO_0000373307" description="Protein MGF 360-19R">
    <location>
        <begin position="1"/>
        <end position="356"/>
    </location>
</feature>
<feature type="repeat" description="ANK">
    <location>
        <begin position="61"/>
        <end position="93"/>
    </location>
</feature>
<organismHost>
    <name type="scientific">Ornithodoros</name>
    <name type="common">relapsing fever ticks</name>
    <dbReference type="NCBI Taxonomy" id="6937"/>
</organismHost>
<organismHost>
    <name type="scientific">Phacochoerus aethiopicus</name>
    <name type="common">Warthog</name>
    <dbReference type="NCBI Taxonomy" id="85517"/>
</organismHost>
<organismHost>
    <name type="scientific">Phacochoerus africanus</name>
    <name type="common">Warthog</name>
    <dbReference type="NCBI Taxonomy" id="41426"/>
</organismHost>
<organismHost>
    <name type="scientific">Potamochoerus larvatus</name>
    <name type="common">Bushpig</name>
    <dbReference type="NCBI Taxonomy" id="273792"/>
</organismHost>
<organismHost>
    <name type="scientific">Sus scrofa</name>
    <name type="common">Pig</name>
    <dbReference type="NCBI Taxonomy" id="9823"/>
</organismHost>
<name>36019_ASFK5</name>
<gene>
    <name type="ordered locus">Ken-002</name>
</gene>